<evidence type="ECO:0000255" key="1">
    <source>
        <dbReference type="HAMAP-Rule" id="MF_01813"/>
    </source>
</evidence>
<gene>
    <name evidence="1" type="primary">menG</name>
    <name type="ordered locus">CTLon_0683</name>
</gene>
<reference key="1">
    <citation type="journal article" date="2008" name="Genome Res.">
        <title>Chlamydia trachomatis: genome sequence analysis of lymphogranuloma venereum isolates.</title>
        <authorList>
            <person name="Thomson N.R."/>
            <person name="Holden M.T.G."/>
            <person name="Carder C."/>
            <person name="Lennard N."/>
            <person name="Lockey S.J."/>
            <person name="Marsh P."/>
            <person name="Skipp P."/>
            <person name="O'Connor C.D."/>
            <person name="Goodhead I."/>
            <person name="Norbertzcak H."/>
            <person name="Harris B."/>
            <person name="Ormond D."/>
            <person name="Rance R."/>
            <person name="Quail M.A."/>
            <person name="Parkhill J."/>
            <person name="Stephens R.S."/>
            <person name="Clarke I.N."/>
        </authorList>
    </citation>
    <scope>NUCLEOTIDE SEQUENCE [LARGE SCALE GENOMIC DNA]</scope>
    <source>
        <strain>UCH-1/proctitis</strain>
    </source>
</reference>
<protein>
    <recommendedName>
        <fullName evidence="1">Demethylmenaquinone methyltransferase</fullName>
        <ecNumber evidence="1">2.1.1.163</ecNumber>
    </recommendedName>
</protein>
<sequence length="229" mass="25844">MTDFHDKPNIQIMFDSLAPTYDKINGILSLGLHIAWNNALVSLLGETNHLLDLCAGTGRVALSYVQNYPRASATLVDFSTKMLENVQKRHPSAPFSYITSDVTHLPLPDNTFRLASMAYGLRNLSYPLEALREVYRVLQPGGHLGILELTRPATYNPVYLLHKLYLNLVVPSVGRFYSGNSYAYSYLKESIRDLPRDAALEAIFHAAHLRPIRKRKLLFGTATIWILEK</sequence>
<feature type="chain" id="PRO_1000187746" description="Demethylmenaquinone methyltransferase">
    <location>
        <begin position="1"/>
        <end position="229"/>
    </location>
</feature>
<feature type="binding site" evidence="1">
    <location>
        <position position="57"/>
    </location>
    <ligand>
        <name>S-adenosyl-L-methionine</name>
        <dbReference type="ChEBI" id="CHEBI:59789"/>
    </ligand>
</feature>
<feature type="binding site" evidence="1">
    <location>
        <position position="77"/>
    </location>
    <ligand>
        <name>S-adenosyl-L-methionine</name>
        <dbReference type="ChEBI" id="CHEBI:59789"/>
    </ligand>
</feature>
<feature type="binding site" evidence="1">
    <location>
        <begin position="101"/>
        <end position="102"/>
    </location>
    <ligand>
        <name>S-adenosyl-L-methionine</name>
        <dbReference type="ChEBI" id="CHEBI:59789"/>
    </ligand>
</feature>
<comment type="function">
    <text evidence="1">Methyltransferase required for the conversion of demethylmenaquinol (DMKH2) to menaquinol (MKH2).</text>
</comment>
<comment type="catalytic activity">
    <reaction evidence="1">
        <text>a 2-demethylmenaquinol + S-adenosyl-L-methionine = a menaquinol + S-adenosyl-L-homocysteine + H(+)</text>
        <dbReference type="Rhea" id="RHEA:42640"/>
        <dbReference type="Rhea" id="RHEA-COMP:9539"/>
        <dbReference type="Rhea" id="RHEA-COMP:9563"/>
        <dbReference type="ChEBI" id="CHEBI:15378"/>
        <dbReference type="ChEBI" id="CHEBI:18151"/>
        <dbReference type="ChEBI" id="CHEBI:55437"/>
        <dbReference type="ChEBI" id="CHEBI:57856"/>
        <dbReference type="ChEBI" id="CHEBI:59789"/>
        <dbReference type="EC" id="2.1.1.163"/>
    </reaction>
</comment>
<comment type="pathway">
    <text evidence="1">Quinol/quinone metabolism; menaquinone biosynthesis; menaquinol from 1,4-dihydroxy-2-naphthoate: step 2/2.</text>
</comment>
<comment type="similarity">
    <text evidence="1">Belongs to the class I-like SAM-binding methyltransferase superfamily. MenG/UbiE family.</text>
</comment>
<name>MENG_CHLTB</name>
<dbReference type="EC" id="2.1.1.163" evidence="1"/>
<dbReference type="EMBL" id="AM884177">
    <property type="protein sequence ID" value="CAP07080.1"/>
    <property type="molecule type" value="Genomic_DNA"/>
</dbReference>
<dbReference type="SMR" id="B0BC65"/>
<dbReference type="KEGG" id="ctl:CTLon_0683"/>
<dbReference type="HOGENOM" id="CLU_037990_0_0_0"/>
<dbReference type="UniPathway" id="UPA00079">
    <property type="reaction ID" value="UER00169"/>
</dbReference>
<dbReference type="Proteomes" id="UP001154401">
    <property type="component" value="Chromosome"/>
</dbReference>
<dbReference type="GO" id="GO:0043770">
    <property type="term" value="F:demethylmenaquinone methyltransferase activity"/>
    <property type="evidence" value="ECO:0007669"/>
    <property type="project" value="UniProtKB-UniRule"/>
</dbReference>
<dbReference type="GO" id="GO:0009234">
    <property type="term" value="P:menaquinone biosynthetic process"/>
    <property type="evidence" value="ECO:0007669"/>
    <property type="project" value="UniProtKB-UniRule"/>
</dbReference>
<dbReference type="GO" id="GO:0032259">
    <property type="term" value="P:methylation"/>
    <property type="evidence" value="ECO:0007669"/>
    <property type="project" value="UniProtKB-KW"/>
</dbReference>
<dbReference type="CDD" id="cd02440">
    <property type="entry name" value="AdoMet_MTases"/>
    <property type="match status" value="1"/>
</dbReference>
<dbReference type="Gene3D" id="3.40.50.150">
    <property type="entry name" value="Vaccinia Virus protein VP39"/>
    <property type="match status" value="1"/>
</dbReference>
<dbReference type="HAMAP" id="MF_01813">
    <property type="entry name" value="MenG_UbiE_methyltr"/>
    <property type="match status" value="1"/>
</dbReference>
<dbReference type="InterPro" id="IPR029063">
    <property type="entry name" value="SAM-dependent_MTases_sf"/>
</dbReference>
<dbReference type="InterPro" id="IPR004033">
    <property type="entry name" value="UbiE/COQ5_MeTrFase"/>
</dbReference>
<dbReference type="InterPro" id="IPR023576">
    <property type="entry name" value="UbiE/COQ5_MeTrFase_CS"/>
</dbReference>
<dbReference type="NCBIfam" id="TIGR01934">
    <property type="entry name" value="MenG_MenH_UbiE"/>
    <property type="match status" value="1"/>
</dbReference>
<dbReference type="NCBIfam" id="NF001244">
    <property type="entry name" value="PRK00216.1-5"/>
    <property type="match status" value="1"/>
</dbReference>
<dbReference type="PANTHER" id="PTHR43591:SF24">
    <property type="entry name" value="2-METHOXY-6-POLYPRENYL-1,4-BENZOQUINOL METHYLASE, MITOCHONDRIAL"/>
    <property type="match status" value="1"/>
</dbReference>
<dbReference type="PANTHER" id="PTHR43591">
    <property type="entry name" value="METHYLTRANSFERASE"/>
    <property type="match status" value="1"/>
</dbReference>
<dbReference type="Pfam" id="PF01209">
    <property type="entry name" value="Ubie_methyltran"/>
    <property type="match status" value="1"/>
</dbReference>
<dbReference type="SUPFAM" id="SSF53335">
    <property type="entry name" value="S-adenosyl-L-methionine-dependent methyltransferases"/>
    <property type="match status" value="1"/>
</dbReference>
<dbReference type="PROSITE" id="PS51608">
    <property type="entry name" value="SAM_MT_UBIE"/>
    <property type="match status" value="1"/>
</dbReference>
<dbReference type="PROSITE" id="PS01183">
    <property type="entry name" value="UBIE_1"/>
    <property type="match status" value="1"/>
</dbReference>
<dbReference type="PROSITE" id="PS01184">
    <property type="entry name" value="UBIE_2"/>
    <property type="match status" value="1"/>
</dbReference>
<keyword id="KW-0474">Menaquinone biosynthesis</keyword>
<keyword id="KW-0489">Methyltransferase</keyword>
<keyword id="KW-0949">S-adenosyl-L-methionine</keyword>
<keyword id="KW-0808">Transferase</keyword>
<proteinExistence type="inferred from homology"/>
<organism>
    <name type="scientific">Chlamydia trachomatis serovar L2b (strain UCH-1/proctitis)</name>
    <dbReference type="NCBI Taxonomy" id="471473"/>
    <lineage>
        <taxon>Bacteria</taxon>
        <taxon>Pseudomonadati</taxon>
        <taxon>Chlamydiota</taxon>
        <taxon>Chlamydiia</taxon>
        <taxon>Chlamydiales</taxon>
        <taxon>Chlamydiaceae</taxon>
        <taxon>Chlamydia/Chlamydophila group</taxon>
        <taxon>Chlamydia</taxon>
    </lineage>
</organism>
<accession>B0BC65</accession>